<accession>Q9RRM7</accession>
<proteinExistence type="inferred from homology"/>
<protein>
    <recommendedName>
        <fullName evidence="1">Histidinol-phosphate aminotransferase</fullName>
        <ecNumber evidence="1">2.6.1.9</ecNumber>
    </recommendedName>
    <alternativeName>
        <fullName evidence="1">Imidazole acetol-phosphate transaminase</fullName>
    </alternativeName>
</protein>
<gene>
    <name evidence="1" type="primary">hisC</name>
    <name type="ordered locus">DR_2461</name>
</gene>
<evidence type="ECO:0000255" key="1">
    <source>
        <dbReference type="HAMAP-Rule" id="MF_01023"/>
    </source>
</evidence>
<sequence>MTQTPPPAPGPSGVRQAVRDIPAYPFTPIDVPYKLDQNENPYDFPPELKQKAAERMLAHPWNRYPDLHADTLRAAIAGYEGWDAAGVVITPGSNVLIKILTELGGIGQTVLTTDPTFSVYTLEAAMLGAELVLTPLNPDFSLPVEATLQALAAHAPGVFYVTQPHAPTGHSDRPEDVRRVVEVADRLGWVTVIDEAYSQYAGTDYRELVRAGKHVLSLRTFSKAWGLAGVRAGYLLTNPELAGHLQKLVSAFTINFLTQAVIETALEHPEYMRERVAEAIAERGRIYAAVQGHPTCTIFPSNTNFFLLKTPDADAAYRHLLEHGIVCRRQDKLRGLDGCLRIAVGTPAENDALIAAILALR</sequence>
<reference key="1">
    <citation type="journal article" date="1999" name="Science">
        <title>Genome sequence of the radioresistant bacterium Deinococcus radiodurans R1.</title>
        <authorList>
            <person name="White O."/>
            <person name="Eisen J.A."/>
            <person name="Heidelberg J.F."/>
            <person name="Hickey E.K."/>
            <person name="Peterson J.D."/>
            <person name="Dodson R.J."/>
            <person name="Haft D.H."/>
            <person name="Gwinn M.L."/>
            <person name="Nelson W.C."/>
            <person name="Richardson D.L."/>
            <person name="Moffat K.S."/>
            <person name="Qin H."/>
            <person name="Jiang L."/>
            <person name="Pamphile W."/>
            <person name="Crosby M."/>
            <person name="Shen M."/>
            <person name="Vamathevan J.J."/>
            <person name="Lam P."/>
            <person name="McDonald L.A."/>
            <person name="Utterback T.R."/>
            <person name="Zalewski C."/>
            <person name="Makarova K.S."/>
            <person name="Aravind L."/>
            <person name="Daly M.J."/>
            <person name="Minton K.W."/>
            <person name="Fleischmann R.D."/>
            <person name="Ketchum K.A."/>
            <person name="Nelson K.E."/>
            <person name="Salzberg S.L."/>
            <person name="Smith H.O."/>
            <person name="Venter J.C."/>
            <person name="Fraser C.M."/>
        </authorList>
    </citation>
    <scope>NUCLEOTIDE SEQUENCE [LARGE SCALE GENOMIC DNA]</scope>
    <source>
        <strain>ATCC 13939 / DSM 20539 / JCM 16871 / CCUG 27074 / LMG 4051 / NBRC 15346 / NCIMB 9279 / VKM B-1422 / R1</strain>
    </source>
</reference>
<comment type="catalytic activity">
    <reaction evidence="1">
        <text>L-histidinol phosphate + 2-oxoglutarate = 3-(imidazol-4-yl)-2-oxopropyl phosphate + L-glutamate</text>
        <dbReference type="Rhea" id="RHEA:23744"/>
        <dbReference type="ChEBI" id="CHEBI:16810"/>
        <dbReference type="ChEBI" id="CHEBI:29985"/>
        <dbReference type="ChEBI" id="CHEBI:57766"/>
        <dbReference type="ChEBI" id="CHEBI:57980"/>
        <dbReference type="EC" id="2.6.1.9"/>
    </reaction>
</comment>
<comment type="cofactor">
    <cofactor evidence="1">
        <name>pyridoxal 5'-phosphate</name>
        <dbReference type="ChEBI" id="CHEBI:597326"/>
    </cofactor>
</comment>
<comment type="pathway">
    <text evidence="1">Amino-acid biosynthesis; L-histidine biosynthesis; L-histidine from 5-phospho-alpha-D-ribose 1-diphosphate: step 7/9.</text>
</comment>
<comment type="subunit">
    <text evidence="1">Homodimer.</text>
</comment>
<comment type="similarity">
    <text evidence="1">Belongs to the class-II pyridoxal-phosphate-dependent aminotransferase family. Histidinol-phosphate aminotransferase subfamily.</text>
</comment>
<keyword id="KW-0028">Amino-acid biosynthesis</keyword>
<keyword id="KW-0032">Aminotransferase</keyword>
<keyword id="KW-0368">Histidine biosynthesis</keyword>
<keyword id="KW-0663">Pyridoxal phosphate</keyword>
<keyword id="KW-1185">Reference proteome</keyword>
<keyword id="KW-0808">Transferase</keyword>
<name>HIS8_DEIRA</name>
<feature type="chain" id="PRO_0000153356" description="Histidinol-phosphate aminotransferase">
    <location>
        <begin position="1"/>
        <end position="361"/>
    </location>
</feature>
<feature type="modified residue" description="N6-(pyridoxal phosphate)lysine" evidence="1">
    <location>
        <position position="223"/>
    </location>
</feature>
<organism>
    <name type="scientific">Deinococcus radiodurans (strain ATCC 13939 / DSM 20539 / JCM 16871 / CCUG 27074 / LMG 4051 / NBRC 15346 / NCIMB 9279 / VKM B-1422 / R1)</name>
    <dbReference type="NCBI Taxonomy" id="243230"/>
    <lineage>
        <taxon>Bacteria</taxon>
        <taxon>Thermotogati</taxon>
        <taxon>Deinococcota</taxon>
        <taxon>Deinococci</taxon>
        <taxon>Deinococcales</taxon>
        <taxon>Deinococcaceae</taxon>
        <taxon>Deinococcus</taxon>
    </lineage>
</organism>
<dbReference type="EC" id="2.6.1.9" evidence="1"/>
<dbReference type="EMBL" id="AE000513">
    <property type="protein sequence ID" value="AAF12000.1"/>
    <property type="molecule type" value="Genomic_DNA"/>
</dbReference>
<dbReference type="PIR" id="G75271">
    <property type="entry name" value="G75271"/>
</dbReference>
<dbReference type="RefSeq" id="NP_296181.1">
    <property type="nucleotide sequence ID" value="NC_001263.1"/>
</dbReference>
<dbReference type="RefSeq" id="WP_010889086.1">
    <property type="nucleotide sequence ID" value="NC_001263.1"/>
</dbReference>
<dbReference type="SMR" id="Q9RRM7"/>
<dbReference type="FunCoup" id="Q9RRM7">
    <property type="interactions" value="411"/>
</dbReference>
<dbReference type="STRING" id="243230.DR_2461"/>
<dbReference type="PaxDb" id="243230-DR_2461"/>
<dbReference type="EnsemblBacteria" id="AAF12000">
    <property type="protein sequence ID" value="AAF12000"/>
    <property type="gene ID" value="DR_2461"/>
</dbReference>
<dbReference type="GeneID" id="69518714"/>
<dbReference type="KEGG" id="dra:DR_2461"/>
<dbReference type="PATRIC" id="fig|243230.17.peg.2697"/>
<dbReference type="eggNOG" id="COG0079">
    <property type="taxonomic scope" value="Bacteria"/>
</dbReference>
<dbReference type="HOGENOM" id="CLU_017584_3_1_0"/>
<dbReference type="InParanoid" id="Q9RRM7"/>
<dbReference type="OrthoDB" id="9813612at2"/>
<dbReference type="UniPathway" id="UPA00031">
    <property type="reaction ID" value="UER00012"/>
</dbReference>
<dbReference type="Proteomes" id="UP000002524">
    <property type="component" value="Chromosome 1"/>
</dbReference>
<dbReference type="GO" id="GO:0004400">
    <property type="term" value="F:histidinol-phosphate transaminase activity"/>
    <property type="evidence" value="ECO:0007669"/>
    <property type="project" value="UniProtKB-UniRule"/>
</dbReference>
<dbReference type="GO" id="GO:0030170">
    <property type="term" value="F:pyridoxal phosphate binding"/>
    <property type="evidence" value="ECO:0007669"/>
    <property type="project" value="InterPro"/>
</dbReference>
<dbReference type="GO" id="GO:0000105">
    <property type="term" value="P:L-histidine biosynthetic process"/>
    <property type="evidence" value="ECO:0007669"/>
    <property type="project" value="UniProtKB-UniRule"/>
</dbReference>
<dbReference type="CDD" id="cd00609">
    <property type="entry name" value="AAT_like"/>
    <property type="match status" value="1"/>
</dbReference>
<dbReference type="FunFam" id="3.40.640.10:FF:000099">
    <property type="entry name" value="LL-diaminopimelate aminotransferase, chloroplastic"/>
    <property type="match status" value="1"/>
</dbReference>
<dbReference type="Gene3D" id="3.90.1150.10">
    <property type="entry name" value="Aspartate Aminotransferase, domain 1"/>
    <property type="match status" value="1"/>
</dbReference>
<dbReference type="Gene3D" id="3.40.640.10">
    <property type="entry name" value="Type I PLP-dependent aspartate aminotransferase-like (Major domain)"/>
    <property type="match status" value="1"/>
</dbReference>
<dbReference type="HAMAP" id="MF_01023">
    <property type="entry name" value="HisC_aminotrans_2"/>
    <property type="match status" value="1"/>
</dbReference>
<dbReference type="InterPro" id="IPR001917">
    <property type="entry name" value="Aminotrans_II_pyridoxalP_BS"/>
</dbReference>
<dbReference type="InterPro" id="IPR004839">
    <property type="entry name" value="Aminotransferase_I/II_large"/>
</dbReference>
<dbReference type="InterPro" id="IPR005861">
    <property type="entry name" value="HisP_aminotrans"/>
</dbReference>
<dbReference type="InterPro" id="IPR015424">
    <property type="entry name" value="PyrdxlP-dep_Trfase"/>
</dbReference>
<dbReference type="InterPro" id="IPR015421">
    <property type="entry name" value="PyrdxlP-dep_Trfase_major"/>
</dbReference>
<dbReference type="InterPro" id="IPR015422">
    <property type="entry name" value="PyrdxlP-dep_Trfase_small"/>
</dbReference>
<dbReference type="PANTHER" id="PTHR42885:SF2">
    <property type="entry name" value="HISTIDINOL-PHOSPHATE AMINOTRANSFERASE"/>
    <property type="match status" value="1"/>
</dbReference>
<dbReference type="PANTHER" id="PTHR42885">
    <property type="entry name" value="HISTIDINOL-PHOSPHATE AMINOTRANSFERASE-RELATED"/>
    <property type="match status" value="1"/>
</dbReference>
<dbReference type="Pfam" id="PF00155">
    <property type="entry name" value="Aminotran_1_2"/>
    <property type="match status" value="1"/>
</dbReference>
<dbReference type="SUPFAM" id="SSF53383">
    <property type="entry name" value="PLP-dependent transferases"/>
    <property type="match status" value="1"/>
</dbReference>
<dbReference type="PROSITE" id="PS00599">
    <property type="entry name" value="AA_TRANSFER_CLASS_2"/>
    <property type="match status" value="1"/>
</dbReference>